<gene>
    <name type="primary">OPG098</name>
    <name type="ORF">L4R</name>
</gene>
<keyword id="KW-1035">Host cytoplasm</keyword>
<keyword id="KW-0426">Late protein</keyword>
<keyword id="KW-1185">Reference proteome</keyword>
<keyword id="KW-0946">Virion</keyword>
<evidence type="ECO:0000250" key="1">
    <source>
        <dbReference type="UniProtKB" id="P03295"/>
    </source>
</evidence>
<evidence type="ECO:0000305" key="2"/>
<feature type="propeptide" id="PRO_0000040589" description="Removed by core protease OPG083/I7" evidence="1">
    <location>
        <begin position="1"/>
        <end position="32"/>
    </location>
</feature>
<feature type="chain" id="PRO_0000040590" description="Core protein VP8" evidence="1">
    <location>
        <begin position="33"/>
        <end position="251"/>
    </location>
</feature>
<feature type="site" description="Cleavage; by core protease OPG083/I7" evidence="1">
    <location>
        <begin position="18"/>
        <end position="19"/>
    </location>
</feature>
<feature type="site" description="Cleavage; by core protease OPG083/I7" evidence="1">
    <location>
        <begin position="32"/>
        <end position="33"/>
    </location>
</feature>
<sequence length="251" mass="28461">MSLLLENLIEEDTIFFAGSISEYDDLQMVIAGAKSKFPRSMLSIFNIVPRTMSKYELELIHNENITGAMFTTMYNIRNNLGLGDDKLTIEAIENYFLDPNNEVMPLIINNTDMTAVIPKKSGRRKNKNMVIFRQGSSPILCIFETRKKINIYKENMESASTEYTPIGDNKALISKYAGINVLNVYSPSTSMRLNAIYGFTNKNKLEKLSTNKELESYSSSPLQEPIRLNDFLGLLECVKKNIPLTDIPTKD</sequence>
<organism>
    <name type="scientific">Vaccinia virus (strain Copenhagen)</name>
    <name type="common">VACV</name>
    <dbReference type="NCBI Taxonomy" id="10249"/>
    <lineage>
        <taxon>Viruses</taxon>
        <taxon>Varidnaviria</taxon>
        <taxon>Bamfordvirae</taxon>
        <taxon>Nucleocytoviricota</taxon>
        <taxon>Pokkesviricetes</taxon>
        <taxon>Chitovirales</taxon>
        <taxon>Poxviridae</taxon>
        <taxon>Chordopoxvirinae</taxon>
        <taxon>Orthopoxvirus</taxon>
        <taxon>Vaccinia virus</taxon>
    </lineage>
</organism>
<proteinExistence type="evidence at transcript level"/>
<reference key="1">
    <citation type="journal article" date="1990" name="Virology">
        <title>The complete DNA sequence of vaccinia virus.</title>
        <authorList>
            <person name="Goebel S.J."/>
            <person name="Johnson G.P."/>
            <person name="Perkus M.E."/>
            <person name="Davis S.W."/>
            <person name="Winslow J.P."/>
            <person name="Paoletti E."/>
        </authorList>
    </citation>
    <scope>NUCLEOTIDE SEQUENCE [LARGE SCALE GENOMIC DNA]</scope>
</reference>
<reference key="2">
    <citation type="journal article" date="1990" name="Virology">
        <title>Appendix to 'The complete DNA sequence of vaccinia virus'.</title>
        <authorList>
            <person name="Goebel S.J."/>
            <person name="Johnson G.P."/>
            <person name="Perkus M.E."/>
            <person name="Davis S.W."/>
            <person name="Winslow J.P."/>
            <person name="Paoletti E."/>
        </authorList>
    </citation>
    <scope>NUCLEOTIDE SEQUENCE [LARGE SCALE GENOMIC DNA]</scope>
</reference>
<protein>
    <recommendedName>
        <fullName>Core protein VP8</fullName>
    </recommendedName>
    <alternativeName>
        <fullName>25 kDa major core protein</fullName>
    </alternativeName>
    <alternativeName>
        <fullName>L4 core protein</fullName>
    </alternativeName>
    <alternativeName>
        <fullName>P25K</fullName>
    </alternativeName>
</protein>
<accession>P20981</accession>
<dbReference type="EMBL" id="M35027">
    <property type="protein sequence ID" value="AAA48079.1"/>
    <property type="molecule type" value="Genomic_DNA"/>
</dbReference>
<dbReference type="PIR" id="B42513">
    <property type="entry name" value="B42513"/>
</dbReference>
<dbReference type="Proteomes" id="UP000008269">
    <property type="component" value="Segment"/>
</dbReference>
<dbReference type="GO" id="GO:0030430">
    <property type="term" value="C:host cell cytoplasm"/>
    <property type="evidence" value="ECO:0007669"/>
    <property type="project" value="UniProtKB-SubCell"/>
</dbReference>
<dbReference type="GO" id="GO:0019028">
    <property type="term" value="C:viral capsid"/>
    <property type="evidence" value="ECO:0007669"/>
    <property type="project" value="InterPro"/>
</dbReference>
<dbReference type="GO" id="GO:0005198">
    <property type="term" value="F:structural molecule activity"/>
    <property type="evidence" value="ECO:0007669"/>
    <property type="project" value="InterPro"/>
</dbReference>
<dbReference type="InterPro" id="IPR007586">
    <property type="entry name" value="VP8_pox_nuc-bd"/>
</dbReference>
<dbReference type="Pfam" id="PF04498">
    <property type="entry name" value="Pox_VP8_L4R"/>
    <property type="match status" value="1"/>
</dbReference>
<name>VP8_VACCC</name>
<organismHost>
    <name type="scientific">Homo sapiens</name>
    <name type="common">Human</name>
    <dbReference type="NCBI Taxonomy" id="9606"/>
</organismHost>
<comment type="function">
    <text evidence="1">Major core structural protein.</text>
</comment>
<comment type="subcellular location">
    <subcellularLocation>
        <location evidence="1">Virion</location>
    </subcellularLocation>
    <subcellularLocation>
        <location evidence="1">Host cytoplasm</location>
    </subcellularLocation>
    <text evidence="1">Localizes to the virion core.</text>
</comment>
<comment type="induction">
    <text>Expressed in the late phase of the viral replicative cycle.</text>
</comment>
<comment type="PTM">
    <text evidence="1">Undergoes morphogenesis-associated proteolysis which cleaves the 28 kDa to a 25-kDa product. Proteolytic cleavage of major core proteins P4a (OPG136), P4b (OPG129), and VP8 (OPG098), which occurs at a late stage of core formation, is required for production of infectious mature virions (MV).</text>
</comment>
<comment type="similarity">
    <text evidence="2">Belongs to the orthopoxvirus OPG098 family.</text>
</comment>